<proteinExistence type="evidence at protein level"/>
<comment type="function">
    <text>Septins are GTPases involved in cytokinesis that assemble early in the cell cycle as a patch at the incipient bud site and form a ring approximate 15 minutes before bud emergence, which transforms into an hour-glass shaped collar of cortical filaments that spans both sides of the mother-bud neck. This collar persists until just before cytokinesis, when it splits into two rings that occupy opposite sides of the neck. The septins at the bud neck serve as a structural scaffold that recruits different components involved in diverse processes at specific stages during the cell cycle. Many proteins bind asymmetrically to the septin collar. The septin assembly is regulated by protein kinases GIN4 and/or CLA4. May act by recruiting MYO1 and HOF1, a protein involved in septation, to the site of cleavage. Septins are also involved in cell morphogenesis, bud site selection, chitin deposition, cell cycle regulation, cell compartmentalization and spore wall formation.</text>
</comment>
<comment type="subunit">
    <text evidence="4 5 8 9">Component of the septin complex which consists of CDC3, CDC10, CDC11, CDC12 and probably SHS1 and rearranges to a cortical collar of highly ordered filaments at the mother-bud-neck. A complex formed by CDC3, CDC10, CDC11 and CDC12 is capable of forming long filaments in vitro and the components seem to be present in a 2:2:2:2 arrangement in vivo. The filaments are proposed to be formed by the end-to-end polymerization of CDC3-CDC12-CDC11 complexes with CDC10 serving as a bridge to bundle the polymers into paired filaments. Component of the GIN4 complex composed of at least BNI5, CDC3, CDC10, CDC11, CDC12, GIN4, NAP1 and SHS1. Self-associates. Interacts with SYP1.</text>
</comment>
<comment type="interaction">
    <interactant intactId="EBI-4182">
        <id>P32468</id>
    </interactant>
    <interactant intactId="EBI-3848">
        <id>P47136</id>
        <label>BUD4</label>
    </interactant>
    <organismsDiffer>false</organismsDiffer>
    <experiments>2</experiments>
</comment>
<comment type="interaction">
    <interactant intactId="EBI-4182">
        <id>P32468</id>
    </interactant>
    <interactant intactId="EBI-4178">
        <id>P32458</id>
        <label>CDC11</label>
    </interactant>
    <organismsDiffer>false</organismsDiffer>
    <experiments>12</experiments>
</comment>
<comment type="interaction">
    <interactant intactId="EBI-4182">
        <id>P32468</id>
    </interactant>
    <interactant intactId="EBI-7575">
        <id>P38785</id>
        <label>GIC1</label>
    </interactant>
    <organismsDiffer>false</organismsDiffer>
    <experiments>5</experiments>
</comment>
<comment type="interaction">
    <interactant intactId="EBI-4182">
        <id>P32468</id>
    </interactant>
    <interactant intactId="EBI-7585">
        <id>Q06648</id>
        <label>GIC2</label>
    </interactant>
    <organismsDiffer>false</organismsDiffer>
    <experiments>5</experiments>
</comment>
<comment type="interaction">
    <interactant intactId="EBI-4182">
        <id>P32468</id>
    </interactant>
    <interactant intactId="EBI-22083">
        <id>Q07657</id>
        <label>SHS1</label>
    </interactant>
    <organismsDiffer>false</organismsDiffer>
    <experiments>5</experiments>
</comment>
<comment type="interaction">
    <interactant intactId="EBI-4182">
        <id>P32468</id>
    </interactant>
    <interactant intactId="EBI-27228">
        <id>Q04477</id>
        <label>SPC24</label>
    </interactant>
    <organismsDiffer>false</organismsDiffer>
    <experiments>3</experiments>
</comment>
<comment type="subcellular location">
    <subcellularLocation>
        <location evidence="6">Membrane</location>
        <topology evidence="6">Peripheral membrane protein</topology>
    </subcellularLocation>
    <subcellularLocation>
        <location evidence="6">Bud neck</location>
    </subcellularLocation>
    <text>Present at the bud neck during cell division. Probably interacts with phosphoinosides such as phosphatidylinositol 4-phosphate or phosphatidylinositol 5-phosphate.</text>
</comment>
<comment type="miscellaneous">
    <text evidence="7">Present with 1170 molecules/cell in log phase SD medium.</text>
</comment>
<comment type="similarity">
    <text evidence="3">Belongs to the TRAFAC class TrmE-Era-EngA-EngB-Septin-like GTPase superfamily. Septin GTPase family.</text>
</comment>
<reference key="1">
    <citation type="journal article" date="1996" name="Curr. Opin. Cell Biol.">
        <title>The septins: roles in cytokinesis and other processes.</title>
        <authorList>
            <person name="Longtine M.S."/>
            <person name="DeMarini D.J."/>
            <person name="Valencik M.L."/>
            <person name="Al-Awar O.S."/>
            <person name="Fares H."/>
            <person name="De Virgilio C."/>
            <person name="Pringle J.R."/>
        </authorList>
    </citation>
    <scope>NUCLEOTIDE SEQUENCE [GENOMIC DNA]</scope>
    <source>
        <strain>ATCC 204510 / AB320</strain>
    </source>
</reference>
<reference key="2">
    <citation type="journal article" date="1995" name="Genes Dev.">
        <title>Ste20-like protein kinases are required for normal localization of cell growth and for cytokinesis in budding yeast.</title>
        <authorList>
            <person name="Cvrckova F."/>
            <person name="de Virgilio C."/>
            <person name="Manser E."/>
            <person name="Pringle J.R."/>
            <person name="Nasmyth K."/>
        </authorList>
    </citation>
    <scope>NUCLEOTIDE SEQUENCE [GENOMIC DNA]</scope>
    <source>
        <strain>K1107</strain>
    </source>
</reference>
<reference key="3">
    <citation type="journal article" date="1994" name="Science">
        <title>Complete nucleotide sequence of Saccharomyces cerevisiae chromosome VIII.</title>
        <authorList>
            <person name="Johnston M."/>
            <person name="Andrews S."/>
            <person name="Brinkman R."/>
            <person name="Cooper J."/>
            <person name="Ding H."/>
            <person name="Dover J."/>
            <person name="Du Z."/>
            <person name="Favello A."/>
            <person name="Fulton L."/>
            <person name="Gattung S."/>
            <person name="Geisel C."/>
            <person name="Kirsten J."/>
            <person name="Kucaba T."/>
            <person name="Hillier L.W."/>
            <person name="Jier M."/>
            <person name="Johnston L."/>
            <person name="Langston Y."/>
            <person name="Latreille P."/>
            <person name="Louis E.J."/>
            <person name="Macri C."/>
            <person name="Mardis E."/>
            <person name="Menezes S."/>
            <person name="Mouser L."/>
            <person name="Nhan M."/>
            <person name="Rifkin L."/>
            <person name="Riles L."/>
            <person name="St Peter H."/>
            <person name="Trevaskis E."/>
            <person name="Vaughan K."/>
            <person name="Vignati D."/>
            <person name="Wilcox L."/>
            <person name="Wohldman P."/>
            <person name="Waterston R."/>
            <person name="Wilson R."/>
            <person name="Vaudin M."/>
        </authorList>
    </citation>
    <scope>NUCLEOTIDE SEQUENCE [LARGE SCALE GENOMIC DNA]</scope>
    <source>
        <strain>ATCC 204508 / S288c</strain>
    </source>
</reference>
<reference key="4">
    <citation type="journal article" date="2014" name="G3 (Bethesda)">
        <title>The reference genome sequence of Saccharomyces cerevisiae: Then and now.</title>
        <authorList>
            <person name="Engel S.R."/>
            <person name="Dietrich F.S."/>
            <person name="Fisk D.G."/>
            <person name="Binkley G."/>
            <person name="Balakrishnan R."/>
            <person name="Costanzo M.C."/>
            <person name="Dwight S.S."/>
            <person name="Hitz B.C."/>
            <person name="Karra K."/>
            <person name="Nash R.S."/>
            <person name="Weng S."/>
            <person name="Wong E.D."/>
            <person name="Lloyd P."/>
            <person name="Skrzypek M.S."/>
            <person name="Miyasato S.R."/>
            <person name="Simison M."/>
            <person name="Cherry J.M."/>
        </authorList>
    </citation>
    <scope>GENOME REANNOTATION</scope>
    <source>
        <strain>ATCC 204508 / S288c</strain>
    </source>
</reference>
<reference key="5">
    <citation type="journal article" date="1998" name="J. Cell Biol.">
        <title>Polymerization of purified yeast septins: evidence that organized filament arrays may not be required for septin function.</title>
        <authorList>
            <person name="Frazier J.A."/>
            <person name="Wong M.L."/>
            <person name="Longtine M.S."/>
            <person name="Pringle J.R."/>
            <person name="Mann M."/>
            <person name="Mitchison T.J."/>
            <person name="Field C."/>
        </authorList>
    </citation>
    <scope>IDENTIFICATION IN THE SEPTIN COMPLEX</scope>
</reference>
<reference key="6">
    <citation type="journal article" date="2002" name="Mol. Biol. Cell">
        <title>Cell cycle-dependent assembly of a Gin4-septin complex.</title>
        <authorList>
            <person name="Mortensen E.M."/>
            <person name="McDonald H."/>
            <person name="Yates J. III"/>
            <person name="Kellogg D.R."/>
        </authorList>
    </citation>
    <scope>IDENTIFICATION IN THE GIN4 COMPLEX</scope>
    <scope>IDENTIFICATION BY MASS SPECTROMETRY</scope>
</reference>
<reference key="7">
    <citation type="journal article" date="2003" name="Nature">
        <title>Global analysis of protein localization in budding yeast.</title>
        <authorList>
            <person name="Huh W.-K."/>
            <person name="Falvo J.V."/>
            <person name="Gerke L.C."/>
            <person name="Carroll A.S."/>
            <person name="Howson R.W."/>
            <person name="Weissman J.S."/>
            <person name="O'Shea E.K."/>
        </authorList>
    </citation>
    <scope>SUBCELLULAR LOCATION [LARGE SCALE ANALYSIS]</scope>
</reference>
<reference key="8">
    <citation type="journal article" date="2003" name="Mol. Cell. Biol.">
        <title>Molecular dissection of a yeast septin: distinct domains are required for septin interaction, localization, and function.</title>
        <authorList>
            <person name="Casamayor A."/>
            <person name="Snyder M."/>
        </authorList>
    </citation>
    <scope>ASSOCIATION WITH PHOSPHOINOSIDES LIPIDS</scope>
    <scope>INTERACTION WITH CDC11</scope>
</reference>
<reference key="9">
    <citation type="journal article" date="2003" name="Nature">
        <title>Global analysis of protein expression in yeast.</title>
        <authorList>
            <person name="Ghaemmaghami S."/>
            <person name="Huh W.-K."/>
            <person name="Bower K."/>
            <person name="Howson R.W."/>
            <person name="Belle A."/>
            <person name="Dephoure N."/>
            <person name="O'Shea E.K."/>
            <person name="Weissman J.S."/>
        </authorList>
    </citation>
    <scope>LEVEL OF PROTEIN EXPRESSION [LARGE SCALE ANALYSIS]</scope>
</reference>
<reference key="10">
    <citation type="journal article" date="2004" name="Mol. Biol. Cell">
        <title>Protein-protein interactions governing septin heteropentamer assembly and septin filament organization in Saccharomyces cerevisiae.</title>
        <authorList>
            <person name="Versele M."/>
            <person name="Gullbrand B."/>
            <person name="Shulewitz M.J."/>
            <person name="Cid V.J."/>
            <person name="Bahmanyar S."/>
            <person name="Chen R.E."/>
            <person name="Barth P."/>
            <person name="Alber T."/>
            <person name="Thorner J."/>
        </authorList>
    </citation>
    <scope>SELF-ASSOCIATION</scope>
    <scope>ASSEMBLY OF THE SEPTIN FILAMENTS</scope>
</reference>
<reference key="11">
    <citation type="journal article" date="2008" name="Genetics">
        <title>A novel septin-associated protein, Syp1p, is required for normal cell cycle-dependent septin cytoskeleton dynamics in yeast.</title>
        <authorList>
            <person name="Qiu W."/>
            <person name="Neo S.P."/>
            <person name="Yu X."/>
            <person name="Cai M."/>
        </authorList>
    </citation>
    <scope>INTERACTION WITH SYP1</scope>
</reference>
<reference key="12">
    <citation type="journal article" date="2012" name="Proc. Natl. Acad. Sci. U.S.A.">
        <title>N-terminal acetylome analyses and functional insights of the N-terminal acetyltransferase NatB.</title>
        <authorList>
            <person name="Van Damme P."/>
            <person name="Lasa M."/>
            <person name="Polevoda B."/>
            <person name="Gazquez C."/>
            <person name="Elosegui-Artola A."/>
            <person name="Kim D.S."/>
            <person name="De Juan-Pardo E."/>
            <person name="Demeyer K."/>
            <person name="Hole K."/>
            <person name="Larrea E."/>
            <person name="Timmerman E."/>
            <person name="Prieto J."/>
            <person name="Arnesen T."/>
            <person name="Sherman F."/>
            <person name="Gevaert K."/>
            <person name="Aldabe R."/>
        </authorList>
    </citation>
    <scope>ACETYLATION [LARGE SCALE ANALYSIS] AT SER-2</scope>
    <scope>CLEAVAGE OF INITIATOR METHIONINE [LARGE SCALE ANALYSIS]</scope>
    <scope>IDENTIFICATION BY MASS SPECTROMETRY [LARGE SCALE ANALYSIS]</scope>
</reference>
<gene>
    <name type="primary">CDC12</name>
    <name type="synonym">CLA10</name>
    <name type="synonym">PSL7</name>
    <name type="ordered locus">YHR107C</name>
</gene>
<evidence type="ECO:0000250" key="1"/>
<evidence type="ECO:0000255" key="2"/>
<evidence type="ECO:0000255" key="3">
    <source>
        <dbReference type="PROSITE-ProRule" id="PRU01056"/>
    </source>
</evidence>
<evidence type="ECO:0000269" key="4">
    <source>
    </source>
</evidence>
<evidence type="ECO:0000269" key="5">
    <source>
    </source>
</evidence>
<evidence type="ECO:0000269" key="6">
    <source>
    </source>
</evidence>
<evidence type="ECO:0000269" key="7">
    <source>
    </source>
</evidence>
<evidence type="ECO:0000269" key="8">
    <source>
    </source>
</evidence>
<evidence type="ECO:0000269" key="9">
    <source>
    </source>
</evidence>
<evidence type="ECO:0007744" key="10">
    <source>
    </source>
</evidence>
<evidence type="ECO:0007829" key="11">
    <source>
        <dbReference type="PDB" id="8PFH"/>
    </source>
</evidence>
<feature type="initiator methionine" description="Removed" evidence="10">
    <location>
        <position position="1"/>
    </location>
</feature>
<feature type="chain" id="PRO_0000173500" description="Cell division control protein 12">
    <location>
        <begin position="2"/>
        <end position="407"/>
    </location>
</feature>
<feature type="domain" description="Septin-type G" evidence="3">
    <location>
        <begin position="31"/>
        <end position="314"/>
    </location>
</feature>
<feature type="region of interest" description="G1 motif" evidence="3">
    <location>
        <begin position="41"/>
        <end position="48"/>
    </location>
</feature>
<feature type="region of interest" description="G3 motif" evidence="3">
    <location>
        <begin position="98"/>
        <end position="101"/>
    </location>
</feature>
<feature type="region of interest" description="G4 motif" evidence="3">
    <location>
        <begin position="179"/>
        <end position="182"/>
    </location>
</feature>
<feature type="coiled-coil region" evidence="2">
    <location>
        <begin position="344"/>
        <end position="406"/>
    </location>
</feature>
<feature type="binding site" evidence="1">
    <location>
        <begin position="41"/>
        <end position="48"/>
    </location>
    <ligand>
        <name>GTP</name>
        <dbReference type="ChEBI" id="CHEBI:37565"/>
    </ligand>
</feature>
<feature type="binding site" evidence="1">
    <location>
        <position position="75"/>
    </location>
    <ligand>
        <name>GTP</name>
        <dbReference type="ChEBI" id="CHEBI:37565"/>
    </ligand>
</feature>
<feature type="binding site" evidence="1">
    <location>
        <position position="101"/>
    </location>
    <ligand>
        <name>GTP</name>
        <dbReference type="ChEBI" id="CHEBI:37565"/>
    </ligand>
</feature>
<feature type="binding site" evidence="1">
    <location>
        <begin position="180"/>
        <end position="188"/>
    </location>
    <ligand>
        <name>GTP</name>
        <dbReference type="ChEBI" id="CHEBI:37565"/>
    </ligand>
</feature>
<feature type="binding site" evidence="1">
    <location>
        <position position="247"/>
    </location>
    <ligand>
        <name>GTP</name>
        <dbReference type="ChEBI" id="CHEBI:37565"/>
    </ligand>
</feature>
<feature type="binding site" evidence="1">
    <location>
        <position position="263"/>
    </location>
    <ligand>
        <name>GTP</name>
        <dbReference type="ChEBI" id="CHEBI:37565"/>
    </ligand>
</feature>
<feature type="modified residue" description="N-acetylserine" evidence="10">
    <location>
        <position position="2"/>
    </location>
</feature>
<feature type="helix" evidence="11">
    <location>
        <begin position="16"/>
        <end position="19"/>
    </location>
</feature>
<feature type="helix" evidence="11">
    <location>
        <begin position="20"/>
        <end position="31"/>
    </location>
</feature>
<feature type="strand" evidence="11">
    <location>
        <begin position="33"/>
        <end position="40"/>
    </location>
</feature>
<feature type="helix" evidence="11">
    <location>
        <begin position="47"/>
        <end position="54"/>
    </location>
</feature>
<feature type="strand" evidence="11">
    <location>
        <begin position="79"/>
        <end position="89"/>
    </location>
</feature>
<feature type="strand" evidence="11">
    <location>
        <begin position="91"/>
        <end position="98"/>
    </location>
</feature>
<feature type="turn" evidence="11">
    <location>
        <begin position="100"/>
        <end position="103"/>
    </location>
</feature>
<feature type="strand" evidence="11">
    <location>
        <begin position="105"/>
        <end position="107"/>
    </location>
</feature>
<feature type="helix" evidence="11">
    <location>
        <begin position="113"/>
        <end position="130"/>
    </location>
</feature>
<feature type="strand" evidence="11">
    <location>
        <begin position="144"/>
        <end position="150"/>
    </location>
</feature>
<feature type="helix" evidence="11">
    <location>
        <begin position="159"/>
        <end position="168"/>
    </location>
</feature>
<feature type="turn" evidence="11">
    <location>
        <begin position="169"/>
        <end position="171"/>
    </location>
</feature>
<feature type="strand" evidence="11">
    <location>
        <begin position="174"/>
        <end position="178"/>
    </location>
</feature>
<feature type="turn" evidence="11">
    <location>
        <begin position="179"/>
        <end position="183"/>
    </location>
</feature>
<feature type="helix" evidence="11">
    <location>
        <begin position="186"/>
        <end position="202"/>
    </location>
</feature>
<feature type="helix" evidence="11">
    <location>
        <begin position="228"/>
        <end position="238"/>
    </location>
</feature>
<feature type="strand" evidence="11">
    <location>
        <begin position="242"/>
        <end position="244"/>
    </location>
</feature>
<feature type="strand" evidence="11">
    <location>
        <begin position="251"/>
        <end position="253"/>
    </location>
</feature>
<feature type="strand" evidence="11">
    <location>
        <begin position="255"/>
        <end position="257"/>
    </location>
</feature>
<feature type="strand" evidence="11">
    <location>
        <begin position="259"/>
        <end position="264"/>
    </location>
</feature>
<feature type="strand" evidence="11">
    <location>
        <begin position="269"/>
        <end position="271"/>
    </location>
</feature>
<feature type="turn" evidence="11">
    <location>
        <begin position="275"/>
        <end position="277"/>
    </location>
</feature>
<feature type="helix" evidence="11">
    <location>
        <begin position="280"/>
        <end position="287"/>
    </location>
</feature>
<feature type="helix" evidence="11">
    <location>
        <begin position="292"/>
        <end position="301"/>
    </location>
</feature>
<feature type="helix" evidence="11">
    <location>
        <begin position="303"/>
        <end position="311"/>
    </location>
</feature>
<dbReference type="EMBL" id="L16551">
    <property type="protein sequence ID" value="AAB50036.1"/>
    <property type="molecule type" value="Genomic_DNA"/>
</dbReference>
<dbReference type="EMBL" id="X82498">
    <property type="protein sequence ID" value="CAA57878.1"/>
    <property type="molecule type" value="Genomic_DNA"/>
</dbReference>
<dbReference type="EMBL" id="U00059">
    <property type="protein sequence ID" value="AAB68863.1"/>
    <property type="molecule type" value="Genomic_DNA"/>
</dbReference>
<dbReference type="EMBL" id="BK006934">
    <property type="protein sequence ID" value="DAA06801.1"/>
    <property type="molecule type" value="Genomic_DNA"/>
</dbReference>
<dbReference type="PIR" id="S50870">
    <property type="entry name" value="S50870"/>
</dbReference>
<dbReference type="RefSeq" id="NP_011975.1">
    <property type="nucleotide sequence ID" value="NM_001179237.1"/>
</dbReference>
<dbReference type="PDB" id="8PFH">
    <property type="method" value="X-ray"/>
    <property type="resolution" value="3.24 A"/>
    <property type="chains" value="C=1-314"/>
</dbReference>
<dbReference type="PDB" id="9GD4">
    <property type="method" value="X-ray"/>
    <property type="resolution" value="2.04 A"/>
    <property type="chains" value="C=1-314"/>
</dbReference>
<dbReference type="PDBsum" id="8PFH"/>
<dbReference type="PDBsum" id="9GD4"/>
<dbReference type="SMR" id="P32468"/>
<dbReference type="BioGRID" id="36540">
    <property type="interactions" value="819"/>
</dbReference>
<dbReference type="ComplexPortal" id="CPX-1675">
    <property type="entry name" value="Septin complex"/>
</dbReference>
<dbReference type="ComplexPortal" id="CPX-1712">
    <property type="entry name" value="Gin4 serine/threonine kinase complex"/>
</dbReference>
<dbReference type="DIP" id="DIP-853N"/>
<dbReference type="FunCoup" id="P32468">
    <property type="interactions" value="221"/>
</dbReference>
<dbReference type="IntAct" id="P32468">
    <property type="interactions" value="53"/>
</dbReference>
<dbReference type="MINT" id="P32468"/>
<dbReference type="STRING" id="4932.YHR107C"/>
<dbReference type="iPTMnet" id="P32468"/>
<dbReference type="PaxDb" id="4932-YHR107C"/>
<dbReference type="PeptideAtlas" id="P32468"/>
<dbReference type="EnsemblFungi" id="YHR107C_mRNA">
    <property type="protein sequence ID" value="YHR107C"/>
    <property type="gene ID" value="YHR107C"/>
</dbReference>
<dbReference type="GeneID" id="856507"/>
<dbReference type="KEGG" id="sce:YHR107C"/>
<dbReference type="AGR" id="SGD:S000001149"/>
<dbReference type="SGD" id="S000001149">
    <property type="gene designation" value="CDC12"/>
</dbReference>
<dbReference type="VEuPathDB" id="FungiDB:YHR107C"/>
<dbReference type="eggNOG" id="KOG2655">
    <property type="taxonomic scope" value="Eukaryota"/>
</dbReference>
<dbReference type="HOGENOM" id="CLU_017718_8_0_1"/>
<dbReference type="InParanoid" id="P32468"/>
<dbReference type="OMA" id="EASHAEI"/>
<dbReference type="OrthoDB" id="416553at2759"/>
<dbReference type="BioCyc" id="YEAST:G3O-31150-MONOMER"/>
<dbReference type="Reactome" id="R-SCE-111457">
    <property type="pathway name" value="Release of apoptotic factors from the mitochondria"/>
</dbReference>
<dbReference type="BioGRID-ORCS" id="856507">
    <property type="hits" value="2 hits in 10 CRISPR screens"/>
</dbReference>
<dbReference type="PRO" id="PR:P32468"/>
<dbReference type="Proteomes" id="UP000002311">
    <property type="component" value="Chromosome VIII"/>
</dbReference>
<dbReference type="RNAct" id="P32468">
    <property type="molecule type" value="protein"/>
</dbReference>
<dbReference type="GO" id="GO:0005619">
    <property type="term" value="C:ascospore wall"/>
    <property type="evidence" value="ECO:0000303"/>
    <property type="project" value="ComplexPortal"/>
</dbReference>
<dbReference type="GO" id="GO:0032153">
    <property type="term" value="C:cell division site"/>
    <property type="evidence" value="ECO:0000318"/>
    <property type="project" value="GO_Central"/>
</dbReference>
<dbReference type="GO" id="GO:0005935">
    <property type="term" value="C:cellular bud neck"/>
    <property type="evidence" value="ECO:0007005"/>
    <property type="project" value="SGD"/>
</dbReference>
<dbReference type="GO" id="GO:0000144">
    <property type="term" value="C:cellular bud neck septin ring"/>
    <property type="evidence" value="ECO:0000314"/>
    <property type="project" value="SGD"/>
</dbReference>
<dbReference type="GO" id="GO:0005621">
    <property type="term" value="C:cellular bud scar"/>
    <property type="evidence" value="ECO:0000314"/>
    <property type="project" value="SGD"/>
</dbReference>
<dbReference type="GO" id="GO:0005737">
    <property type="term" value="C:cytoplasm"/>
    <property type="evidence" value="ECO:0007005"/>
    <property type="project" value="SGD"/>
</dbReference>
<dbReference type="GO" id="GO:1990317">
    <property type="term" value="C:Gin4 complex"/>
    <property type="evidence" value="ECO:0000353"/>
    <property type="project" value="ComplexPortal"/>
</dbReference>
<dbReference type="GO" id="GO:0005937">
    <property type="term" value="C:mating projection"/>
    <property type="evidence" value="ECO:0000314"/>
    <property type="project" value="SGD"/>
</dbReference>
<dbReference type="GO" id="GO:0015630">
    <property type="term" value="C:microtubule cytoskeleton"/>
    <property type="evidence" value="ECO:0000318"/>
    <property type="project" value="GO_Central"/>
</dbReference>
<dbReference type="GO" id="GO:0005628">
    <property type="term" value="C:prospore membrane"/>
    <property type="evidence" value="ECO:0007005"/>
    <property type="project" value="SGD"/>
</dbReference>
<dbReference type="GO" id="GO:0031105">
    <property type="term" value="C:septin complex"/>
    <property type="evidence" value="ECO:0000314"/>
    <property type="project" value="SGD"/>
</dbReference>
<dbReference type="GO" id="GO:0032160">
    <property type="term" value="C:septin filament array"/>
    <property type="evidence" value="ECO:0000314"/>
    <property type="project" value="SGD"/>
</dbReference>
<dbReference type="GO" id="GO:0005940">
    <property type="term" value="C:septin ring"/>
    <property type="evidence" value="ECO:0000318"/>
    <property type="project" value="GO_Central"/>
</dbReference>
<dbReference type="GO" id="GO:0005525">
    <property type="term" value="F:GTP binding"/>
    <property type="evidence" value="ECO:0000314"/>
    <property type="project" value="SGD"/>
</dbReference>
<dbReference type="GO" id="GO:0003924">
    <property type="term" value="F:GTPase activity"/>
    <property type="evidence" value="ECO:0000314"/>
    <property type="project" value="SGD"/>
</dbReference>
<dbReference type="GO" id="GO:0060090">
    <property type="term" value="F:molecular adaptor activity"/>
    <property type="evidence" value="ECO:0000315"/>
    <property type="project" value="SGD"/>
</dbReference>
<dbReference type="GO" id="GO:0070273">
    <property type="term" value="F:phosphatidylinositol-4-phosphate binding"/>
    <property type="evidence" value="ECO:0000314"/>
    <property type="project" value="SGD"/>
</dbReference>
<dbReference type="GO" id="GO:0010314">
    <property type="term" value="F:phosphatidylinositol-5-phosphate binding"/>
    <property type="evidence" value="ECO:0000314"/>
    <property type="project" value="SGD"/>
</dbReference>
<dbReference type="GO" id="GO:0005200">
    <property type="term" value="F:structural constituent of cytoskeleton"/>
    <property type="evidence" value="ECO:0000314"/>
    <property type="project" value="SGD"/>
</dbReference>
<dbReference type="GO" id="GO:0032186">
    <property type="term" value="P:cellular bud neck septin ring organization"/>
    <property type="evidence" value="ECO:0000303"/>
    <property type="project" value="ComplexPortal"/>
</dbReference>
<dbReference type="GO" id="GO:0061640">
    <property type="term" value="P:cytoskeleton-dependent cytokinesis"/>
    <property type="evidence" value="ECO:0000318"/>
    <property type="project" value="GO_Central"/>
</dbReference>
<dbReference type="GO" id="GO:0030011">
    <property type="term" value="P:maintenance of cell polarity"/>
    <property type="evidence" value="ECO:0000315"/>
    <property type="project" value="SGD"/>
</dbReference>
<dbReference type="GO" id="GO:1903475">
    <property type="term" value="P:mitotic actomyosin contractile ring assembly"/>
    <property type="evidence" value="ECO:0000315"/>
    <property type="project" value="SGD"/>
</dbReference>
<dbReference type="GO" id="GO:0000281">
    <property type="term" value="P:mitotic cytokinesis"/>
    <property type="evidence" value="ECO:0000315"/>
    <property type="project" value="SGD"/>
</dbReference>
<dbReference type="GO" id="GO:0008104">
    <property type="term" value="P:protein localization"/>
    <property type="evidence" value="ECO:0000318"/>
    <property type="project" value="GO_Central"/>
</dbReference>
<dbReference type="GO" id="GO:0000921">
    <property type="term" value="P:septin ring assembly"/>
    <property type="evidence" value="ECO:0000314"/>
    <property type="project" value="SGD"/>
</dbReference>
<dbReference type="GO" id="GO:0000920">
    <property type="term" value="P:septum digestion after cytokinesis"/>
    <property type="evidence" value="ECO:0000303"/>
    <property type="project" value="ComplexPortal"/>
</dbReference>
<dbReference type="CDD" id="cd01850">
    <property type="entry name" value="CDC_Septin"/>
    <property type="match status" value="1"/>
</dbReference>
<dbReference type="FunFam" id="3.40.50.300:FF:000238">
    <property type="entry name" value="Cell division control 12"/>
    <property type="match status" value="1"/>
</dbReference>
<dbReference type="Gene3D" id="3.40.50.300">
    <property type="entry name" value="P-loop containing nucleotide triphosphate hydrolases"/>
    <property type="match status" value="1"/>
</dbReference>
<dbReference type="InterPro" id="IPR030379">
    <property type="entry name" value="G_SEPTIN_dom"/>
</dbReference>
<dbReference type="InterPro" id="IPR027417">
    <property type="entry name" value="P-loop_NTPase"/>
</dbReference>
<dbReference type="InterPro" id="IPR016491">
    <property type="entry name" value="Septin"/>
</dbReference>
<dbReference type="PANTHER" id="PTHR18884">
    <property type="entry name" value="SEPTIN"/>
    <property type="match status" value="1"/>
</dbReference>
<dbReference type="Pfam" id="PF00735">
    <property type="entry name" value="Septin"/>
    <property type="match status" value="1"/>
</dbReference>
<dbReference type="PIRSF" id="PIRSF006698">
    <property type="entry name" value="Septin"/>
    <property type="match status" value="1"/>
</dbReference>
<dbReference type="SUPFAM" id="SSF52540">
    <property type="entry name" value="P-loop containing nucleoside triphosphate hydrolases"/>
    <property type="match status" value="1"/>
</dbReference>
<dbReference type="PROSITE" id="PS51719">
    <property type="entry name" value="G_SEPTIN"/>
    <property type="match status" value="1"/>
</dbReference>
<protein>
    <recommendedName>
        <fullName>Cell division control protein 12</fullName>
    </recommendedName>
    <alternativeName>
        <fullName>Septin</fullName>
    </alternativeName>
</protein>
<organism>
    <name type="scientific">Saccharomyces cerevisiae (strain ATCC 204508 / S288c)</name>
    <name type="common">Baker's yeast</name>
    <dbReference type="NCBI Taxonomy" id="559292"/>
    <lineage>
        <taxon>Eukaryota</taxon>
        <taxon>Fungi</taxon>
        <taxon>Dikarya</taxon>
        <taxon>Ascomycota</taxon>
        <taxon>Saccharomycotina</taxon>
        <taxon>Saccharomycetes</taxon>
        <taxon>Saccharomycetales</taxon>
        <taxon>Saccharomycetaceae</taxon>
        <taxon>Saccharomyces</taxon>
    </lineage>
</organism>
<accession>P32468</accession>
<accession>D3DL57</accession>
<name>CDC12_YEAST</name>
<keyword id="KW-0002">3D-structure</keyword>
<keyword id="KW-0007">Acetylation</keyword>
<keyword id="KW-0131">Cell cycle</keyword>
<keyword id="KW-0132">Cell division</keyword>
<keyword id="KW-0175">Coiled coil</keyword>
<keyword id="KW-0342">GTP-binding</keyword>
<keyword id="KW-0472">Membrane</keyword>
<keyword id="KW-0547">Nucleotide-binding</keyword>
<keyword id="KW-1185">Reference proteome</keyword>
<sequence>MSAATATAAPVPPPVGISNLPNQRYKIVNEEGGTFTVMLCGESGLGKTTFINTLFQTVLKRADGQQHRQEPIRKTVEIDITRALLEEKHFELRVNVIDTPGFGDNVNNNKAWQPLVDFIDDQHDSYMRQEQQPYRTKKFDLRVHAVLYFIRPTGHGLKPIDIETMKRLSTRANLIPVIAKADTLTAQELQQFKSRIRQVIEAQEIRIFTPPLDADSKEDAKSGSNPDSAAVEHARQLIEAMPFAIVGSEKKFDNGQGTQVVARKYPWGLVEIENDSHCDFRKLRALLLRTYLLDLISTTQEMHYETYRRLRLEGHENTGEGNEDFTLPAIAPARKLSHNPRYKEEENALKKYFTDQVKAEEQRFRQWEQNIVNERIRLNGDLEEIQGKVKKLEEQVKSLQVKKSHLK</sequence>